<name>AROB_SERP5</name>
<accession>A8GKQ7</accession>
<dbReference type="EC" id="4.2.3.4" evidence="1"/>
<dbReference type="EMBL" id="CP000826">
    <property type="protein sequence ID" value="ABV43697.1"/>
    <property type="molecule type" value="Genomic_DNA"/>
</dbReference>
<dbReference type="SMR" id="A8GKQ7"/>
<dbReference type="STRING" id="399741.Spro_4604"/>
<dbReference type="KEGG" id="spe:Spro_4604"/>
<dbReference type="eggNOG" id="COG0337">
    <property type="taxonomic scope" value="Bacteria"/>
</dbReference>
<dbReference type="HOGENOM" id="CLU_001201_0_2_6"/>
<dbReference type="OrthoDB" id="9806583at2"/>
<dbReference type="UniPathway" id="UPA00053">
    <property type="reaction ID" value="UER00085"/>
</dbReference>
<dbReference type="GO" id="GO:0005737">
    <property type="term" value="C:cytoplasm"/>
    <property type="evidence" value="ECO:0007669"/>
    <property type="project" value="UniProtKB-SubCell"/>
</dbReference>
<dbReference type="GO" id="GO:0003856">
    <property type="term" value="F:3-dehydroquinate synthase activity"/>
    <property type="evidence" value="ECO:0007669"/>
    <property type="project" value="UniProtKB-UniRule"/>
</dbReference>
<dbReference type="GO" id="GO:0046872">
    <property type="term" value="F:metal ion binding"/>
    <property type="evidence" value="ECO:0007669"/>
    <property type="project" value="UniProtKB-KW"/>
</dbReference>
<dbReference type="GO" id="GO:0000166">
    <property type="term" value="F:nucleotide binding"/>
    <property type="evidence" value="ECO:0007669"/>
    <property type="project" value="UniProtKB-KW"/>
</dbReference>
<dbReference type="GO" id="GO:0008652">
    <property type="term" value="P:amino acid biosynthetic process"/>
    <property type="evidence" value="ECO:0007669"/>
    <property type="project" value="UniProtKB-KW"/>
</dbReference>
<dbReference type="GO" id="GO:0009073">
    <property type="term" value="P:aromatic amino acid family biosynthetic process"/>
    <property type="evidence" value="ECO:0007669"/>
    <property type="project" value="UniProtKB-KW"/>
</dbReference>
<dbReference type="GO" id="GO:0009423">
    <property type="term" value="P:chorismate biosynthetic process"/>
    <property type="evidence" value="ECO:0007669"/>
    <property type="project" value="UniProtKB-UniRule"/>
</dbReference>
<dbReference type="CDD" id="cd08195">
    <property type="entry name" value="DHQS"/>
    <property type="match status" value="1"/>
</dbReference>
<dbReference type="FunFam" id="1.20.1090.10:FF:000002">
    <property type="entry name" value="3-dehydroquinate synthase"/>
    <property type="match status" value="1"/>
</dbReference>
<dbReference type="FunFam" id="3.40.50.1970:FF:000001">
    <property type="entry name" value="3-dehydroquinate synthase"/>
    <property type="match status" value="1"/>
</dbReference>
<dbReference type="Gene3D" id="3.40.50.1970">
    <property type="match status" value="1"/>
</dbReference>
<dbReference type="Gene3D" id="1.20.1090.10">
    <property type="entry name" value="Dehydroquinate synthase-like - alpha domain"/>
    <property type="match status" value="1"/>
</dbReference>
<dbReference type="HAMAP" id="MF_00110">
    <property type="entry name" value="DHQ_synthase"/>
    <property type="match status" value="1"/>
</dbReference>
<dbReference type="InterPro" id="IPR050071">
    <property type="entry name" value="Dehydroquinate_synthase"/>
</dbReference>
<dbReference type="InterPro" id="IPR016037">
    <property type="entry name" value="DHQ_synth_AroB"/>
</dbReference>
<dbReference type="InterPro" id="IPR030963">
    <property type="entry name" value="DHQ_synth_fam"/>
</dbReference>
<dbReference type="InterPro" id="IPR030960">
    <property type="entry name" value="DHQS/DOIS_N"/>
</dbReference>
<dbReference type="InterPro" id="IPR056179">
    <property type="entry name" value="DHQS_C"/>
</dbReference>
<dbReference type="NCBIfam" id="TIGR01357">
    <property type="entry name" value="aroB"/>
    <property type="match status" value="1"/>
</dbReference>
<dbReference type="PANTHER" id="PTHR43622">
    <property type="entry name" value="3-DEHYDROQUINATE SYNTHASE"/>
    <property type="match status" value="1"/>
</dbReference>
<dbReference type="PANTHER" id="PTHR43622:SF7">
    <property type="entry name" value="3-DEHYDROQUINATE SYNTHASE, CHLOROPLASTIC"/>
    <property type="match status" value="1"/>
</dbReference>
<dbReference type="Pfam" id="PF01761">
    <property type="entry name" value="DHQ_synthase"/>
    <property type="match status" value="1"/>
</dbReference>
<dbReference type="Pfam" id="PF24621">
    <property type="entry name" value="DHQS_C"/>
    <property type="match status" value="1"/>
</dbReference>
<dbReference type="PIRSF" id="PIRSF001455">
    <property type="entry name" value="DHQ_synth"/>
    <property type="match status" value="1"/>
</dbReference>
<dbReference type="SUPFAM" id="SSF56796">
    <property type="entry name" value="Dehydroquinate synthase-like"/>
    <property type="match status" value="1"/>
</dbReference>
<protein>
    <recommendedName>
        <fullName evidence="1">3-dehydroquinate synthase</fullName>
        <shortName evidence="1">DHQS</shortName>
        <ecNumber evidence="1">4.2.3.4</ecNumber>
    </recommendedName>
</protein>
<proteinExistence type="inferred from homology"/>
<organism>
    <name type="scientific">Serratia proteamaculans (strain 568)</name>
    <dbReference type="NCBI Taxonomy" id="399741"/>
    <lineage>
        <taxon>Bacteria</taxon>
        <taxon>Pseudomonadati</taxon>
        <taxon>Pseudomonadota</taxon>
        <taxon>Gammaproteobacteria</taxon>
        <taxon>Enterobacterales</taxon>
        <taxon>Yersiniaceae</taxon>
        <taxon>Serratia</taxon>
    </lineage>
</organism>
<comment type="function">
    <text evidence="1">Catalyzes the conversion of 3-deoxy-D-arabino-heptulosonate 7-phosphate (DAHP) to dehydroquinate (DHQ).</text>
</comment>
<comment type="catalytic activity">
    <reaction evidence="1">
        <text>7-phospho-2-dehydro-3-deoxy-D-arabino-heptonate = 3-dehydroquinate + phosphate</text>
        <dbReference type="Rhea" id="RHEA:21968"/>
        <dbReference type="ChEBI" id="CHEBI:32364"/>
        <dbReference type="ChEBI" id="CHEBI:43474"/>
        <dbReference type="ChEBI" id="CHEBI:58394"/>
        <dbReference type="EC" id="4.2.3.4"/>
    </reaction>
</comment>
<comment type="cofactor">
    <cofactor evidence="1">
        <name>Co(2+)</name>
        <dbReference type="ChEBI" id="CHEBI:48828"/>
    </cofactor>
    <cofactor evidence="1">
        <name>Zn(2+)</name>
        <dbReference type="ChEBI" id="CHEBI:29105"/>
    </cofactor>
    <text evidence="1">Binds 1 divalent metal cation per subunit. Can use either Co(2+) or Zn(2+).</text>
</comment>
<comment type="cofactor">
    <cofactor evidence="1">
        <name>NAD(+)</name>
        <dbReference type="ChEBI" id="CHEBI:57540"/>
    </cofactor>
</comment>
<comment type="pathway">
    <text evidence="1">Metabolic intermediate biosynthesis; chorismate biosynthesis; chorismate from D-erythrose 4-phosphate and phosphoenolpyruvate: step 2/7.</text>
</comment>
<comment type="subcellular location">
    <subcellularLocation>
        <location evidence="1">Cytoplasm</location>
    </subcellularLocation>
</comment>
<comment type="similarity">
    <text evidence="1">Belongs to the sugar phosphate cyclases superfamily. Dehydroquinate synthase family.</text>
</comment>
<gene>
    <name evidence="1" type="primary">aroB</name>
    <name type="ordered locus">Spro_4604</name>
</gene>
<reference key="1">
    <citation type="submission" date="2007-09" db="EMBL/GenBank/DDBJ databases">
        <title>Complete sequence of chromosome of Serratia proteamaculans 568.</title>
        <authorList>
            <consortium name="US DOE Joint Genome Institute"/>
            <person name="Copeland A."/>
            <person name="Lucas S."/>
            <person name="Lapidus A."/>
            <person name="Barry K."/>
            <person name="Glavina del Rio T."/>
            <person name="Dalin E."/>
            <person name="Tice H."/>
            <person name="Pitluck S."/>
            <person name="Chain P."/>
            <person name="Malfatti S."/>
            <person name="Shin M."/>
            <person name="Vergez L."/>
            <person name="Schmutz J."/>
            <person name="Larimer F."/>
            <person name="Land M."/>
            <person name="Hauser L."/>
            <person name="Kyrpides N."/>
            <person name="Kim E."/>
            <person name="Taghavi S."/>
            <person name="Newman L."/>
            <person name="Vangronsveld J."/>
            <person name="van der Lelie D."/>
            <person name="Richardson P."/>
        </authorList>
    </citation>
    <scope>NUCLEOTIDE SEQUENCE [LARGE SCALE GENOMIC DNA]</scope>
    <source>
        <strain>568</strain>
    </source>
</reference>
<sequence length="366" mass="39464">MERITVTLGERSYPITIAAGLFNDPASFMPLKAGEQVMLVTNQTLAPLYLDHVRKVLEQAGVMVDQVILPDGEQYKSLAVLEQVFSALLEKPHGRDTTLIALGGGVIGDLTGFAAACYQRGVRFIQVPTTLLSQVDSSVGGKTAVNHPLGKNMIGAFYQPVSVVVDLDCLKTLPARELSSGLAEVIKYGIILDHDFFVWLENNIDALVALDMQALAYCIRRCCELKAEVVAADERESGLRALLNLGHTYGHAIEAEMGYGVWLHGEAIAAGMVMAAETAHRLGQFSREDIERIKALLLRAGLPVCGPQEMAPGTYLPHMMRDKKVLAGELRLVLPTAIGQAEVRGGVGHDMVLASIAACFPDGMSK</sequence>
<keyword id="KW-0028">Amino-acid biosynthesis</keyword>
<keyword id="KW-0057">Aromatic amino acid biosynthesis</keyword>
<keyword id="KW-0170">Cobalt</keyword>
<keyword id="KW-0963">Cytoplasm</keyword>
<keyword id="KW-0456">Lyase</keyword>
<keyword id="KW-0479">Metal-binding</keyword>
<keyword id="KW-0520">NAD</keyword>
<keyword id="KW-0547">Nucleotide-binding</keyword>
<keyword id="KW-0862">Zinc</keyword>
<feature type="chain" id="PRO_1000094604" description="3-dehydroquinate synthase">
    <location>
        <begin position="1"/>
        <end position="366"/>
    </location>
</feature>
<feature type="binding site" evidence="1">
    <location>
        <begin position="71"/>
        <end position="76"/>
    </location>
    <ligand>
        <name>NAD(+)</name>
        <dbReference type="ChEBI" id="CHEBI:57540"/>
    </ligand>
</feature>
<feature type="binding site" evidence="1">
    <location>
        <begin position="105"/>
        <end position="109"/>
    </location>
    <ligand>
        <name>NAD(+)</name>
        <dbReference type="ChEBI" id="CHEBI:57540"/>
    </ligand>
</feature>
<feature type="binding site" evidence="1">
    <location>
        <begin position="129"/>
        <end position="130"/>
    </location>
    <ligand>
        <name>NAD(+)</name>
        <dbReference type="ChEBI" id="CHEBI:57540"/>
    </ligand>
</feature>
<feature type="binding site" evidence="1">
    <location>
        <position position="142"/>
    </location>
    <ligand>
        <name>NAD(+)</name>
        <dbReference type="ChEBI" id="CHEBI:57540"/>
    </ligand>
</feature>
<feature type="binding site" evidence="1">
    <location>
        <position position="151"/>
    </location>
    <ligand>
        <name>NAD(+)</name>
        <dbReference type="ChEBI" id="CHEBI:57540"/>
    </ligand>
</feature>
<feature type="binding site" evidence="1">
    <location>
        <begin position="169"/>
        <end position="172"/>
    </location>
    <ligand>
        <name>NAD(+)</name>
        <dbReference type="ChEBI" id="CHEBI:57540"/>
    </ligand>
</feature>
<feature type="binding site" evidence="1">
    <location>
        <position position="184"/>
    </location>
    <ligand>
        <name>Zn(2+)</name>
        <dbReference type="ChEBI" id="CHEBI:29105"/>
    </ligand>
</feature>
<feature type="binding site" evidence="1">
    <location>
        <position position="247"/>
    </location>
    <ligand>
        <name>Zn(2+)</name>
        <dbReference type="ChEBI" id="CHEBI:29105"/>
    </ligand>
</feature>
<feature type="binding site" evidence="1">
    <location>
        <position position="264"/>
    </location>
    <ligand>
        <name>Zn(2+)</name>
        <dbReference type="ChEBI" id="CHEBI:29105"/>
    </ligand>
</feature>
<evidence type="ECO:0000255" key="1">
    <source>
        <dbReference type="HAMAP-Rule" id="MF_00110"/>
    </source>
</evidence>